<reference key="1">
    <citation type="submission" date="2009-01" db="EMBL/GenBank/DDBJ databases">
        <title>Complete sequence of Geobacter sp. FRC-32.</title>
        <authorList>
            <consortium name="US DOE Joint Genome Institute"/>
            <person name="Lucas S."/>
            <person name="Copeland A."/>
            <person name="Lapidus A."/>
            <person name="Glavina del Rio T."/>
            <person name="Dalin E."/>
            <person name="Tice H."/>
            <person name="Bruce D."/>
            <person name="Goodwin L."/>
            <person name="Pitluck S."/>
            <person name="Saunders E."/>
            <person name="Brettin T."/>
            <person name="Detter J.C."/>
            <person name="Han C."/>
            <person name="Larimer F."/>
            <person name="Land M."/>
            <person name="Hauser L."/>
            <person name="Kyrpides N."/>
            <person name="Ovchinnikova G."/>
            <person name="Kostka J."/>
            <person name="Richardson P."/>
        </authorList>
    </citation>
    <scope>NUCLEOTIDE SEQUENCE [LARGE SCALE GENOMIC DNA]</scope>
    <source>
        <strain>DSM 22248 / JCM 15807 / FRC-32</strain>
    </source>
</reference>
<protein>
    <recommendedName>
        <fullName evidence="1">Glycine--tRNA ligase beta subunit</fullName>
        <ecNumber evidence="1">6.1.1.14</ecNumber>
    </recommendedName>
    <alternativeName>
        <fullName evidence="1">Glycyl-tRNA synthetase beta subunit</fullName>
        <shortName evidence="1">GlyRS</shortName>
    </alternativeName>
</protein>
<feature type="chain" id="PRO_1000197201" description="Glycine--tRNA ligase beta subunit">
    <location>
        <begin position="1"/>
        <end position="687"/>
    </location>
</feature>
<sequence>MAKELFLEIGTEEIPAGFLPKAMADMEGLIRKELESARIGFGEVKTMATPRRLALVVKNVSAQQTDAEITTMGPAKKVAFNDDGTTTKAGEGFARGQGVDASALSIIATEKGEYVAVTKKEIGVATAGLLAEILPRLINNIPFKKSMRWGDQEVRFARPMHWIVALFDGTVIPFAFGNVQSGSMSRGHRFMANTSFPVRDFGHYLEECERHFVIPDPAKRKEIISREIERVAKAAGGNVLPDEGLLEQVTYLVEYPSAVHGTFSAEFLAVPKEVLITSMREHQRYFSLVDDKGKLLPGFITINNTLTEDPSVVVKGNEMVLRARLSDARFFFEEDKKVPLEKRVEALKSVLYQAKLGTSYEKMERFRTLAEGLAEQLQPPLKAKVFQAATLCKADLVTGMVGEFPEVQGIMGREYALLQGVDAEVARAIAEHYLPNQAGGELPASDTGAFVSIADKVDTICGCFSVGLIPSGSADPYALRRAALGIINIILAKGYNLPLIPLVTKAIGQLEGRLTRKKEEVLADVLDFFKGRFINLLTDRFPADVVEAVVAVSFDNLVEATAKIEALAQFKKRDDFEPLAVAFKRVCNIVKEQVTVPVDDKLFQDAAEGTLFQSFKSASSMVEEKVVQREYLAALTQIASLKGAVDDFFDKVMVMAEDEGVRNNRLALLQEIKSLFRDIADFGKLTA</sequence>
<keyword id="KW-0030">Aminoacyl-tRNA synthetase</keyword>
<keyword id="KW-0067">ATP-binding</keyword>
<keyword id="KW-0963">Cytoplasm</keyword>
<keyword id="KW-0436">Ligase</keyword>
<keyword id="KW-0547">Nucleotide-binding</keyword>
<keyword id="KW-0648">Protein biosynthesis</keyword>
<keyword id="KW-1185">Reference proteome</keyword>
<comment type="catalytic activity">
    <reaction evidence="1">
        <text>tRNA(Gly) + glycine + ATP = glycyl-tRNA(Gly) + AMP + diphosphate</text>
        <dbReference type="Rhea" id="RHEA:16013"/>
        <dbReference type="Rhea" id="RHEA-COMP:9664"/>
        <dbReference type="Rhea" id="RHEA-COMP:9683"/>
        <dbReference type="ChEBI" id="CHEBI:30616"/>
        <dbReference type="ChEBI" id="CHEBI:33019"/>
        <dbReference type="ChEBI" id="CHEBI:57305"/>
        <dbReference type="ChEBI" id="CHEBI:78442"/>
        <dbReference type="ChEBI" id="CHEBI:78522"/>
        <dbReference type="ChEBI" id="CHEBI:456215"/>
        <dbReference type="EC" id="6.1.1.14"/>
    </reaction>
</comment>
<comment type="subunit">
    <text evidence="1">Tetramer of two alpha and two beta subunits.</text>
</comment>
<comment type="subcellular location">
    <subcellularLocation>
        <location evidence="1">Cytoplasm</location>
    </subcellularLocation>
</comment>
<comment type="similarity">
    <text evidence="1">Belongs to the class-II aminoacyl-tRNA synthetase family.</text>
</comment>
<evidence type="ECO:0000255" key="1">
    <source>
        <dbReference type="HAMAP-Rule" id="MF_00255"/>
    </source>
</evidence>
<accession>B9M5V4</accession>
<proteinExistence type="inferred from homology"/>
<dbReference type="EC" id="6.1.1.14" evidence="1"/>
<dbReference type="EMBL" id="CP001390">
    <property type="protein sequence ID" value="ACM19935.1"/>
    <property type="molecule type" value="Genomic_DNA"/>
</dbReference>
<dbReference type="RefSeq" id="WP_012646664.1">
    <property type="nucleotide sequence ID" value="NC_011979.1"/>
</dbReference>
<dbReference type="SMR" id="B9M5V4"/>
<dbReference type="STRING" id="316067.Geob_1577"/>
<dbReference type="KEGG" id="geo:Geob_1577"/>
<dbReference type="eggNOG" id="COG0751">
    <property type="taxonomic scope" value="Bacteria"/>
</dbReference>
<dbReference type="HOGENOM" id="CLU_007220_2_2_7"/>
<dbReference type="OrthoDB" id="9775440at2"/>
<dbReference type="Proteomes" id="UP000007721">
    <property type="component" value="Chromosome"/>
</dbReference>
<dbReference type="GO" id="GO:0005829">
    <property type="term" value="C:cytosol"/>
    <property type="evidence" value="ECO:0007669"/>
    <property type="project" value="TreeGrafter"/>
</dbReference>
<dbReference type="GO" id="GO:0004814">
    <property type="term" value="F:arginine-tRNA ligase activity"/>
    <property type="evidence" value="ECO:0007669"/>
    <property type="project" value="InterPro"/>
</dbReference>
<dbReference type="GO" id="GO:0005524">
    <property type="term" value="F:ATP binding"/>
    <property type="evidence" value="ECO:0007669"/>
    <property type="project" value="UniProtKB-UniRule"/>
</dbReference>
<dbReference type="GO" id="GO:0004820">
    <property type="term" value="F:glycine-tRNA ligase activity"/>
    <property type="evidence" value="ECO:0007669"/>
    <property type="project" value="UniProtKB-UniRule"/>
</dbReference>
<dbReference type="GO" id="GO:0006420">
    <property type="term" value="P:arginyl-tRNA aminoacylation"/>
    <property type="evidence" value="ECO:0007669"/>
    <property type="project" value="InterPro"/>
</dbReference>
<dbReference type="GO" id="GO:0006426">
    <property type="term" value="P:glycyl-tRNA aminoacylation"/>
    <property type="evidence" value="ECO:0007669"/>
    <property type="project" value="UniProtKB-UniRule"/>
</dbReference>
<dbReference type="HAMAP" id="MF_00255">
    <property type="entry name" value="Gly_tRNA_synth_beta"/>
    <property type="match status" value="1"/>
</dbReference>
<dbReference type="InterPro" id="IPR008909">
    <property type="entry name" value="DALR_anticod-bd"/>
</dbReference>
<dbReference type="InterPro" id="IPR015944">
    <property type="entry name" value="Gly-tRNA-synth_bsu"/>
</dbReference>
<dbReference type="InterPro" id="IPR006194">
    <property type="entry name" value="Gly-tRNA-synth_heterodimer"/>
</dbReference>
<dbReference type="NCBIfam" id="TIGR00211">
    <property type="entry name" value="glyS"/>
    <property type="match status" value="1"/>
</dbReference>
<dbReference type="PANTHER" id="PTHR30075:SF2">
    <property type="entry name" value="GLYCINE--TRNA LIGASE, CHLOROPLASTIC_MITOCHONDRIAL 2"/>
    <property type="match status" value="1"/>
</dbReference>
<dbReference type="PANTHER" id="PTHR30075">
    <property type="entry name" value="GLYCYL-TRNA SYNTHETASE"/>
    <property type="match status" value="1"/>
</dbReference>
<dbReference type="Pfam" id="PF05746">
    <property type="entry name" value="DALR_1"/>
    <property type="match status" value="1"/>
</dbReference>
<dbReference type="Pfam" id="PF02092">
    <property type="entry name" value="tRNA_synt_2f"/>
    <property type="match status" value="1"/>
</dbReference>
<dbReference type="PRINTS" id="PR01045">
    <property type="entry name" value="TRNASYNTHGB"/>
</dbReference>
<dbReference type="SUPFAM" id="SSF109604">
    <property type="entry name" value="HD-domain/PDEase-like"/>
    <property type="match status" value="1"/>
</dbReference>
<dbReference type="PROSITE" id="PS50861">
    <property type="entry name" value="AA_TRNA_LIGASE_II_GLYAB"/>
    <property type="match status" value="1"/>
</dbReference>
<gene>
    <name evidence="1" type="primary">glyS</name>
    <name type="ordered locus">Geob_1577</name>
</gene>
<organism>
    <name type="scientific">Geotalea daltonii (strain DSM 22248 / JCM 15807 / FRC-32)</name>
    <name type="common">Geobacter daltonii</name>
    <dbReference type="NCBI Taxonomy" id="316067"/>
    <lineage>
        <taxon>Bacteria</taxon>
        <taxon>Pseudomonadati</taxon>
        <taxon>Thermodesulfobacteriota</taxon>
        <taxon>Desulfuromonadia</taxon>
        <taxon>Geobacterales</taxon>
        <taxon>Geobacteraceae</taxon>
        <taxon>Geotalea</taxon>
    </lineage>
</organism>
<name>SYGB_GEODF</name>